<accession>P12604</accession>
<accession>Q67279</accession>
<accession>Q67280</accession>
<accession>Q67281</accession>
<organism>
    <name type="scientific">Influenza A virus (strain A/Fowl plague virus/Rostock/8/1934 H7N1)</name>
    <dbReference type="NCBI Taxonomy" id="392810"/>
    <lineage>
        <taxon>Viruses</taxon>
        <taxon>Riboviria</taxon>
        <taxon>Orthornavirae</taxon>
        <taxon>Negarnaviricota</taxon>
        <taxon>Polyploviricotina</taxon>
        <taxon>Insthoviricetes</taxon>
        <taxon>Articulavirales</taxon>
        <taxon>Orthomyxoviridae</taxon>
        <taxon>Alphainfluenzavirus</taxon>
        <taxon>Alphainfluenzavirus influenzae</taxon>
        <taxon>Influenza A virus</taxon>
    </lineage>
</organism>
<proteinExistence type="inferred from homology"/>
<reference key="1">
    <citation type="journal article" date="1984" name="Virus Res.">
        <title>Nucleotide sequence of RNA segment 5, encoding the nucleoprotein, of influenza A/FPV/Rostock/34.</title>
        <authorList>
            <person name="Tomley F.M."/>
            <person name="Roditi I.J."/>
        </authorList>
    </citation>
    <scope>NUCLEOTIDE SEQUENCE [GENOMIC RNA]</scope>
</reference>
<reference key="2">
    <citation type="journal article" date="1989" name="Virology">
        <title>Two subtypes of nucleoproteins (NP) of influenza A viruses.</title>
        <authorList>
            <person name="Gammelin M."/>
            <person name="Mandler J."/>
            <person name="Scholtissek C."/>
        </authorList>
    </citation>
    <scope>NUCLEOTIDE SEQUENCE [GENOMIC RNA]</scope>
</reference>
<reference key="3">
    <citation type="journal article" date="1989" name="Virus Res.">
        <title>Localization of the temperature-sensitive defect in the nucleoprotein of an influenza A/FPV/Rostock/34 virus.</title>
        <authorList>
            <person name="Mandler J."/>
            <person name="Scholtissek C."/>
        </authorList>
    </citation>
    <scope>NUCLEOTIDE SEQUENCE [GENOMIC RNA]</scope>
    <source>
        <strain>Mutant ts19</strain>
        <strain>Mutant ts81</strain>
        <strain>Revertant 19R</strain>
        <strain>Revertant 81R</strain>
    </source>
</reference>
<keyword id="KW-0167">Capsid protein</keyword>
<keyword id="KW-1139">Helical capsid protein</keyword>
<keyword id="KW-1048">Host nucleus</keyword>
<keyword id="KW-0945">Host-virus interaction</keyword>
<keyword id="KW-0687">Ribonucleoprotein</keyword>
<keyword id="KW-0694">RNA-binding</keyword>
<keyword id="KW-0543">Viral nucleoprotein</keyword>
<keyword id="KW-1163">Viral penetration into host nucleus</keyword>
<keyword id="KW-0946">Virion</keyword>
<keyword id="KW-1160">Virus entry into host cell</keyword>
<protein>
    <recommendedName>
        <fullName evidence="1">Nucleoprotein</fullName>
    </recommendedName>
    <alternativeName>
        <fullName evidence="1">Nucleocapsid protein</fullName>
        <shortName evidence="1">Protein N</shortName>
    </alternativeName>
</protein>
<organismHost>
    <name type="scientific">Aves</name>
    <dbReference type="NCBI Taxonomy" id="8782"/>
</organismHost>
<evidence type="ECO:0000255" key="1">
    <source>
        <dbReference type="HAMAP-Rule" id="MF_04070"/>
    </source>
</evidence>
<evidence type="ECO:0000256" key="2">
    <source>
        <dbReference type="SAM" id="MobiDB-lite"/>
    </source>
</evidence>
<comment type="function">
    <text evidence="1">Encapsidates the negative strand viral RNA, protecting it from nucleases. The encapsidated genomic RNA is termed the ribonucleoprotein (RNP) and serves as template for transcription and replication. The RNP needs to be localized in the host nucleus to start an infectious cycle, but is too large to diffuse through the nuclear pore complex. NP comprises at least 2 nuclear localization signals that are responsible for the active RNP import into the nucleus through cellular importin alpha/beta pathway. Later in the infection, nclear export of RNPs are mediated through viral proteins NEP interacting with M1 which binds nucleoproteins. It is possible that nucleoprotein binds directly host exportin-1/XPO1 and plays an active role in RNPs nuclear export. M1 interaction with RNP seems to hide nucleoprotein's nuclear localization signals. Soon after a virion infects a new cell, M1 dissociates from the RNP under acidification of the virion driven by M2 protein. Dissociation of M1 from RNP unmasks nucleoprotein's nuclear localization signals, targeting the RNP to the nucleus.</text>
</comment>
<comment type="subunit">
    <text evidence="1">Homomultimerizes to form the nucleocapsid. May bind host exportin-1/XPO1. Binds to viral genomic RNA. Protein-RNA contacts are mediated by a combination of electrostatic interactions between positively charged residues and the phosphate backbone and planar interactions between aromatic side chains and bases.</text>
</comment>
<comment type="subcellular location">
    <subcellularLocation>
        <location evidence="1">Virion</location>
    </subcellularLocation>
    <subcellularLocation>
        <location evidence="1">Host nucleus</location>
    </subcellularLocation>
</comment>
<comment type="PTM">
    <text evidence="1">Late in virus-infected cells, may be cleaved from a 56-kDa protein to a 53-kDa protein by a cellular caspase. This cleavage might be a marker for the onset of apoptosis in infected cells or have a specific function in virus host interaction.</text>
</comment>
<comment type="similarity">
    <text evidence="1">Belongs to the influenza viruses nucleoprotein family.</text>
</comment>
<sequence>MASQGTKRSYEQMETGGERQNATEIRASVGRMVSGIGRFYIQMCTELKLSDYEGRLIQNSITIERMVLSAFDERRNRYLEEHPSAGKDPKKTGGPIYRRRDGKWVRELILYDKEEIRRIWRQANNGEDATAGLTHLMIWHSNLNDATYQRTRALVRTGMDPRMCSLMQGSTLPRRSGAAGAAVKGVGTMVMELIRMIKRGINDRNFWRGENGRRTRIAYERMCNILKGKFQTAAQRAMMDQVRESRNPGNAEIEDLIFLARSALILRGSVAHKSCLPACVYGLAVASGYDFEREGYSLVGIDPFRLLQNSQVFSLIRPNENPAHKSQLVWMACHSAAFEDLRVSSFIRGTRVVPRGQLSTRGVQIASNENMETMDSSTLELRSRYWAIRTRSGGNTNQQRASAGQISVQPTFSVQRNLPFERATIMAAFTGNTEGRTSDMRTEIIRMMESARPEDVSFQGRGVFELSDEKATSPIVPSLDMSNEGSYFFGDNAEEYDN</sequence>
<dbReference type="EMBL" id="M21937">
    <property type="protein sequence ID" value="AAA43116.1"/>
    <property type="molecule type" value="Genomic_RNA"/>
</dbReference>
<dbReference type="EMBL" id="M22576">
    <property type="protein sequence ID" value="AAB59744.1"/>
    <property type="molecule type" value="Genomic_RNA"/>
</dbReference>
<dbReference type="EMBL" id="M24556">
    <property type="protein sequence ID" value="AAA64422.1"/>
    <property type="molecule type" value="Genomic_RNA"/>
</dbReference>
<dbReference type="EMBL" id="M24557">
    <property type="protein sequence ID" value="AAA64423.1"/>
    <property type="molecule type" value="Genomic_RNA"/>
</dbReference>
<dbReference type="EMBL" id="M24660">
    <property type="protein sequence ID" value="AAA64424.1"/>
    <property type="molecule type" value="Genomic_RNA"/>
</dbReference>
<dbReference type="PIR" id="A42757">
    <property type="entry name" value="A42757"/>
</dbReference>
<dbReference type="SMR" id="P12604"/>
<dbReference type="GO" id="GO:0019029">
    <property type="term" value="C:helical viral capsid"/>
    <property type="evidence" value="ECO:0007669"/>
    <property type="project" value="UniProtKB-UniRule"/>
</dbReference>
<dbReference type="GO" id="GO:0043657">
    <property type="term" value="C:host cell"/>
    <property type="evidence" value="ECO:0007669"/>
    <property type="project" value="GOC"/>
</dbReference>
<dbReference type="GO" id="GO:0042025">
    <property type="term" value="C:host cell nucleus"/>
    <property type="evidence" value="ECO:0007669"/>
    <property type="project" value="UniProtKB-SubCell"/>
</dbReference>
<dbReference type="GO" id="GO:1990904">
    <property type="term" value="C:ribonucleoprotein complex"/>
    <property type="evidence" value="ECO:0007669"/>
    <property type="project" value="UniProtKB-KW"/>
</dbReference>
<dbReference type="GO" id="GO:0019013">
    <property type="term" value="C:viral nucleocapsid"/>
    <property type="evidence" value="ECO:0007669"/>
    <property type="project" value="UniProtKB-UniRule"/>
</dbReference>
<dbReference type="GO" id="GO:0003723">
    <property type="term" value="F:RNA binding"/>
    <property type="evidence" value="ECO:0007669"/>
    <property type="project" value="UniProtKB-UniRule"/>
</dbReference>
<dbReference type="GO" id="GO:0005198">
    <property type="term" value="F:structural molecule activity"/>
    <property type="evidence" value="ECO:0007669"/>
    <property type="project" value="UniProtKB-UniRule"/>
</dbReference>
<dbReference type="GO" id="GO:0046718">
    <property type="term" value="P:symbiont entry into host cell"/>
    <property type="evidence" value="ECO:0007669"/>
    <property type="project" value="UniProtKB-KW"/>
</dbReference>
<dbReference type="GO" id="GO:0075732">
    <property type="term" value="P:viral penetration into host nucleus"/>
    <property type="evidence" value="ECO:0007669"/>
    <property type="project" value="UniProtKB-UniRule"/>
</dbReference>
<dbReference type="HAMAP" id="MF_04070">
    <property type="entry name" value="INFV_NCAP"/>
    <property type="match status" value="1"/>
</dbReference>
<dbReference type="InterPro" id="IPR002141">
    <property type="entry name" value="Flu_NP"/>
</dbReference>
<dbReference type="Pfam" id="PF00506">
    <property type="entry name" value="Flu_NP"/>
    <property type="match status" value="1"/>
</dbReference>
<dbReference type="SUPFAM" id="SSF161003">
    <property type="entry name" value="flu NP-like"/>
    <property type="match status" value="1"/>
</dbReference>
<name>NCAP_I34A0</name>
<gene>
    <name evidence="1" type="primary">NP</name>
</gene>
<feature type="chain" id="PRO_0000079047" description="Nucleoprotein">
    <location>
        <begin position="1"/>
        <end position="498"/>
    </location>
</feature>
<feature type="region of interest" description="Disordered" evidence="2">
    <location>
        <begin position="1"/>
        <end position="21"/>
    </location>
</feature>
<feature type="short sequence motif" description="Unconventional nuclear localization signal" evidence="1">
    <location>
        <begin position="1"/>
        <end position="18"/>
    </location>
</feature>
<feature type="short sequence motif" description="Bipartite nuclear localization signal" evidence="1">
    <location>
        <begin position="198"/>
        <end position="216"/>
    </location>
</feature>
<feature type="sequence variant" description="In strain: Mutant ts19.">
    <original>R</original>
    <variation>K</variation>
    <location>
        <position position="162"/>
    </location>
</feature>
<feature type="sequence variant" description="In strain: Mutant ts81 and Revertant 81R.">
    <original>A</original>
    <variation>T</variation>
    <location>
        <position position="332"/>
    </location>
</feature>
<feature type="sequence variant" description="In strain: Mutant ts19 and Revertant 19R.">
    <original>V</original>
    <variation>A</variation>
    <location>
        <position position="363"/>
    </location>
</feature>
<feature type="sequence conflict" description="In Ref. 1; AAA43116." ref="1">
    <original>I</original>
    <variation>M</variation>
    <location>
        <position position="201"/>
    </location>
</feature>
<feature type="sequence conflict" description="In Ref. 1; AAA43116." ref="1">
    <original>A</original>
    <variation>T</variation>
    <location>
        <position position="284"/>
    </location>
</feature>
<feature type="sequence conflict" description="In Ref. 1; AAA43116." ref="1">
    <original>P</original>
    <variation>S</variation>
    <location>
        <position position="318"/>
    </location>
</feature>
<feature type="sequence conflict" description="In Ref. 1; AAA43116." ref="1">
    <original>S</original>
    <variation>P</variation>
    <location>
        <position position="359"/>
    </location>
</feature>